<name>SYDND_NEIMA</name>
<feature type="chain" id="PRO_0000110909" description="Aspartate--tRNA(Asp/Asn) ligase">
    <location>
        <begin position="1"/>
        <end position="602"/>
    </location>
</feature>
<feature type="region of interest" description="Aspartate" evidence="1">
    <location>
        <begin position="196"/>
        <end position="199"/>
    </location>
</feature>
<feature type="binding site" evidence="1">
    <location>
        <position position="172"/>
    </location>
    <ligand>
        <name>L-aspartate</name>
        <dbReference type="ChEBI" id="CHEBI:29991"/>
    </ligand>
</feature>
<feature type="binding site" evidence="1">
    <location>
        <begin position="218"/>
        <end position="220"/>
    </location>
    <ligand>
        <name>ATP</name>
        <dbReference type="ChEBI" id="CHEBI:30616"/>
    </ligand>
</feature>
<feature type="binding site" evidence="1">
    <location>
        <position position="218"/>
    </location>
    <ligand>
        <name>L-aspartate</name>
        <dbReference type="ChEBI" id="CHEBI:29991"/>
    </ligand>
</feature>
<feature type="binding site" evidence="1">
    <location>
        <position position="227"/>
    </location>
    <ligand>
        <name>ATP</name>
        <dbReference type="ChEBI" id="CHEBI:30616"/>
    </ligand>
</feature>
<feature type="binding site" evidence="1">
    <location>
        <position position="457"/>
    </location>
    <ligand>
        <name>L-aspartate</name>
        <dbReference type="ChEBI" id="CHEBI:29991"/>
    </ligand>
</feature>
<feature type="binding site" evidence="1">
    <location>
        <position position="491"/>
    </location>
    <ligand>
        <name>ATP</name>
        <dbReference type="ChEBI" id="CHEBI:30616"/>
    </ligand>
</feature>
<feature type="binding site" evidence="1">
    <location>
        <position position="498"/>
    </location>
    <ligand>
        <name>L-aspartate</name>
        <dbReference type="ChEBI" id="CHEBI:29991"/>
    </ligand>
</feature>
<feature type="binding site" evidence="1">
    <location>
        <begin position="543"/>
        <end position="546"/>
    </location>
    <ligand>
        <name>ATP</name>
        <dbReference type="ChEBI" id="CHEBI:30616"/>
    </ligand>
</feature>
<feature type="site" description="Important for tRNA non-discrimination" evidence="1">
    <location>
        <position position="30"/>
    </location>
</feature>
<feature type="site" description="Important for tRNA non-discrimination" evidence="1">
    <location>
        <position position="81"/>
    </location>
</feature>
<comment type="function">
    <text evidence="1">Aspartyl-tRNA synthetase with relaxed tRNA specificity since it is able to aspartylate not only its cognate tRNA(Asp) but also tRNA(Asn). Reaction proceeds in two steps: L-aspartate is first activated by ATP to form Asp-AMP and then transferred to the acceptor end of tRNA(Asp/Asn).</text>
</comment>
<comment type="catalytic activity">
    <reaction evidence="1">
        <text>tRNA(Asx) + L-aspartate + ATP = L-aspartyl-tRNA(Asx) + AMP + diphosphate</text>
        <dbReference type="Rhea" id="RHEA:18349"/>
        <dbReference type="Rhea" id="RHEA-COMP:9710"/>
        <dbReference type="Rhea" id="RHEA-COMP:9711"/>
        <dbReference type="ChEBI" id="CHEBI:29991"/>
        <dbReference type="ChEBI" id="CHEBI:30616"/>
        <dbReference type="ChEBI" id="CHEBI:33019"/>
        <dbReference type="ChEBI" id="CHEBI:78442"/>
        <dbReference type="ChEBI" id="CHEBI:78516"/>
        <dbReference type="ChEBI" id="CHEBI:456215"/>
        <dbReference type="EC" id="6.1.1.23"/>
    </reaction>
</comment>
<comment type="subunit">
    <text evidence="1">Homodimer.</text>
</comment>
<comment type="subcellular location">
    <subcellularLocation>
        <location evidence="1">Cytoplasm</location>
    </subcellularLocation>
</comment>
<comment type="similarity">
    <text evidence="1">Belongs to the class-II aminoacyl-tRNA synthetase family. Type 1 subfamily.</text>
</comment>
<keyword id="KW-0030">Aminoacyl-tRNA synthetase</keyword>
<keyword id="KW-0067">ATP-binding</keyword>
<keyword id="KW-0963">Cytoplasm</keyword>
<keyword id="KW-0436">Ligase</keyword>
<keyword id="KW-0547">Nucleotide-binding</keyword>
<keyword id="KW-0648">Protein biosynthesis</keyword>
<protein>
    <recommendedName>
        <fullName evidence="1">Aspartate--tRNA(Asp/Asn) ligase</fullName>
        <ecNumber evidence="1">6.1.1.23</ecNumber>
    </recommendedName>
    <alternativeName>
        <fullName evidence="1">Aspartyl-tRNA synthetase</fullName>
        <shortName evidence="1">AspRS</shortName>
    </alternativeName>
    <alternativeName>
        <fullName evidence="1">Non-discriminating aspartyl-tRNA synthetase</fullName>
        <shortName evidence="1">ND-AspRS</shortName>
    </alternativeName>
</protein>
<proteinExistence type="inferred from homology"/>
<dbReference type="EC" id="6.1.1.23" evidence="1"/>
<dbReference type="EMBL" id="AL157959">
    <property type="protein sequence ID" value="CAM09124.1"/>
    <property type="molecule type" value="Genomic_DNA"/>
</dbReference>
<dbReference type="PIR" id="F81831">
    <property type="entry name" value="F81831"/>
</dbReference>
<dbReference type="RefSeq" id="WP_002245918.1">
    <property type="nucleotide sequence ID" value="NC_003116.1"/>
</dbReference>
<dbReference type="SMR" id="Q9JT23"/>
<dbReference type="EnsemblBacteria" id="CAM09124">
    <property type="protein sequence ID" value="CAM09124"/>
    <property type="gene ID" value="NMA2019"/>
</dbReference>
<dbReference type="GeneID" id="93387561"/>
<dbReference type="KEGG" id="nma:NMA2019"/>
<dbReference type="HOGENOM" id="CLU_014330_3_2_4"/>
<dbReference type="Proteomes" id="UP000000626">
    <property type="component" value="Chromosome"/>
</dbReference>
<dbReference type="GO" id="GO:0005737">
    <property type="term" value="C:cytoplasm"/>
    <property type="evidence" value="ECO:0007669"/>
    <property type="project" value="UniProtKB-SubCell"/>
</dbReference>
<dbReference type="GO" id="GO:0004815">
    <property type="term" value="F:aspartate-tRNA ligase activity"/>
    <property type="evidence" value="ECO:0007669"/>
    <property type="project" value="UniProtKB-UniRule"/>
</dbReference>
<dbReference type="GO" id="GO:0050560">
    <property type="term" value="F:aspartate-tRNA(Asn) ligase activity"/>
    <property type="evidence" value="ECO:0007669"/>
    <property type="project" value="UniProtKB-EC"/>
</dbReference>
<dbReference type="GO" id="GO:0005524">
    <property type="term" value="F:ATP binding"/>
    <property type="evidence" value="ECO:0007669"/>
    <property type="project" value="UniProtKB-UniRule"/>
</dbReference>
<dbReference type="GO" id="GO:0003676">
    <property type="term" value="F:nucleic acid binding"/>
    <property type="evidence" value="ECO:0007669"/>
    <property type="project" value="InterPro"/>
</dbReference>
<dbReference type="GO" id="GO:0006422">
    <property type="term" value="P:aspartyl-tRNA aminoacylation"/>
    <property type="evidence" value="ECO:0007669"/>
    <property type="project" value="UniProtKB-UniRule"/>
</dbReference>
<dbReference type="CDD" id="cd00777">
    <property type="entry name" value="AspRS_core"/>
    <property type="match status" value="1"/>
</dbReference>
<dbReference type="CDD" id="cd04317">
    <property type="entry name" value="EcAspRS_like_N"/>
    <property type="match status" value="1"/>
</dbReference>
<dbReference type="Gene3D" id="3.30.930.10">
    <property type="entry name" value="Bira Bifunctional Protein, Domain 2"/>
    <property type="match status" value="1"/>
</dbReference>
<dbReference type="Gene3D" id="3.30.1360.30">
    <property type="entry name" value="GAD-like domain"/>
    <property type="match status" value="1"/>
</dbReference>
<dbReference type="Gene3D" id="2.40.50.140">
    <property type="entry name" value="Nucleic acid-binding proteins"/>
    <property type="match status" value="1"/>
</dbReference>
<dbReference type="HAMAP" id="MF_00044">
    <property type="entry name" value="Asp_tRNA_synth_type1"/>
    <property type="match status" value="1"/>
</dbReference>
<dbReference type="InterPro" id="IPR004364">
    <property type="entry name" value="Aa-tRNA-synt_II"/>
</dbReference>
<dbReference type="InterPro" id="IPR006195">
    <property type="entry name" value="aa-tRNA-synth_II"/>
</dbReference>
<dbReference type="InterPro" id="IPR045864">
    <property type="entry name" value="aa-tRNA-synth_II/BPL/LPL"/>
</dbReference>
<dbReference type="InterPro" id="IPR004524">
    <property type="entry name" value="Asp-tRNA-ligase_1"/>
</dbReference>
<dbReference type="InterPro" id="IPR047089">
    <property type="entry name" value="Asp-tRNA-ligase_1_N"/>
</dbReference>
<dbReference type="InterPro" id="IPR002312">
    <property type="entry name" value="Asp/Asn-tRNA-synth_IIb"/>
</dbReference>
<dbReference type="InterPro" id="IPR047090">
    <property type="entry name" value="AspRS_core"/>
</dbReference>
<dbReference type="InterPro" id="IPR004115">
    <property type="entry name" value="GAD-like_sf"/>
</dbReference>
<dbReference type="InterPro" id="IPR029351">
    <property type="entry name" value="GAD_dom"/>
</dbReference>
<dbReference type="InterPro" id="IPR012340">
    <property type="entry name" value="NA-bd_OB-fold"/>
</dbReference>
<dbReference type="InterPro" id="IPR004365">
    <property type="entry name" value="NA-bd_OB_tRNA"/>
</dbReference>
<dbReference type="NCBIfam" id="TIGR00459">
    <property type="entry name" value="aspS_bact"/>
    <property type="match status" value="1"/>
</dbReference>
<dbReference type="NCBIfam" id="NF001750">
    <property type="entry name" value="PRK00476.1"/>
    <property type="match status" value="1"/>
</dbReference>
<dbReference type="PANTHER" id="PTHR22594:SF5">
    <property type="entry name" value="ASPARTATE--TRNA LIGASE, MITOCHONDRIAL"/>
    <property type="match status" value="1"/>
</dbReference>
<dbReference type="PANTHER" id="PTHR22594">
    <property type="entry name" value="ASPARTYL/LYSYL-TRNA SYNTHETASE"/>
    <property type="match status" value="1"/>
</dbReference>
<dbReference type="Pfam" id="PF02938">
    <property type="entry name" value="GAD"/>
    <property type="match status" value="1"/>
</dbReference>
<dbReference type="Pfam" id="PF00152">
    <property type="entry name" value="tRNA-synt_2"/>
    <property type="match status" value="1"/>
</dbReference>
<dbReference type="Pfam" id="PF01336">
    <property type="entry name" value="tRNA_anti-codon"/>
    <property type="match status" value="1"/>
</dbReference>
<dbReference type="PRINTS" id="PR01042">
    <property type="entry name" value="TRNASYNTHASP"/>
</dbReference>
<dbReference type="SUPFAM" id="SSF55681">
    <property type="entry name" value="Class II aaRS and biotin synthetases"/>
    <property type="match status" value="1"/>
</dbReference>
<dbReference type="SUPFAM" id="SSF55261">
    <property type="entry name" value="GAD domain-like"/>
    <property type="match status" value="1"/>
</dbReference>
<dbReference type="SUPFAM" id="SSF50249">
    <property type="entry name" value="Nucleic acid-binding proteins"/>
    <property type="match status" value="1"/>
</dbReference>
<dbReference type="PROSITE" id="PS50862">
    <property type="entry name" value="AA_TRNA_LIGASE_II"/>
    <property type="match status" value="1"/>
</dbReference>
<reference key="1">
    <citation type="journal article" date="2000" name="Nature">
        <title>Complete DNA sequence of a serogroup A strain of Neisseria meningitidis Z2491.</title>
        <authorList>
            <person name="Parkhill J."/>
            <person name="Achtman M."/>
            <person name="James K.D."/>
            <person name="Bentley S.D."/>
            <person name="Churcher C.M."/>
            <person name="Klee S.R."/>
            <person name="Morelli G."/>
            <person name="Basham D."/>
            <person name="Brown D."/>
            <person name="Chillingworth T."/>
            <person name="Davies R.M."/>
            <person name="Davis P."/>
            <person name="Devlin K."/>
            <person name="Feltwell T."/>
            <person name="Hamlin N."/>
            <person name="Holroyd S."/>
            <person name="Jagels K."/>
            <person name="Leather S."/>
            <person name="Moule S."/>
            <person name="Mungall K.L."/>
            <person name="Quail M.A."/>
            <person name="Rajandream M.A."/>
            <person name="Rutherford K.M."/>
            <person name="Simmonds M."/>
            <person name="Skelton J."/>
            <person name="Whitehead S."/>
            <person name="Spratt B.G."/>
            <person name="Barrell B.G."/>
        </authorList>
    </citation>
    <scope>NUCLEOTIDE SEQUENCE [LARGE SCALE GENOMIC DNA]</scope>
    <source>
        <strain>DSM 15465 / Z2491</strain>
    </source>
</reference>
<evidence type="ECO:0000255" key="1">
    <source>
        <dbReference type="HAMAP-Rule" id="MF_00044"/>
    </source>
</evidence>
<organism>
    <name type="scientific">Neisseria meningitidis serogroup A / serotype 4A (strain DSM 15465 / Z2491)</name>
    <dbReference type="NCBI Taxonomy" id="122587"/>
    <lineage>
        <taxon>Bacteria</taxon>
        <taxon>Pseudomonadati</taxon>
        <taxon>Pseudomonadota</taxon>
        <taxon>Betaproteobacteria</taxon>
        <taxon>Neisseriales</taxon>
        <taxon>Neisseriaceae</taxon>
        <taxon>Neisseria</taxon>
    </lineage>
</organism>
<gene>
    <name evidence="1" type="primary">aspS</name>
    <name type="ordered locus">NMA2019</name>
</gene>
<accession>Q9JT23</accession>
<accession>A1ITK7</accession>
<sequence>MRTNYCGLISEQYLDQTVTVKGWVHRRRDHGGVIFIDLRDREGIVQVVIDPDTPEAFAAADSARNEYVLSITGRVRNRPEGTTNDKMISGKIEILAKEIEVLNAAATPPFQIDDENISENVRLTNRVIDLRRPVMQRNLRLRYQVAMGVRRYLDAQGFIDIETPMLTRSTPEGARDYLVPSRVHPGEFFALPQSPQLFKQLLMVAGFDRYYQITKCFRDEDLRADRQPEFTQIDLETSFLNEDEIMDITEGMAKQVFKDALGVDLGDFPRMPYSEAMFYYGSDKPDMRINLKFTELTDLMKTEEFKVFRGAADMKGGRVVALRVPNGAKFSRKEIDEYTKFVGIYGAKGLAYIKVNDVGNLSNGEDSGLQSPIVKFLSENALKEIIARTGAQNGDIIFFGADKTKVVNEAIGALRIKVGLEHGKDNGYFTDEWKPLWVVDFPMFEYDEEADRYVAVHHPFTAPKEGHEDLMVSDPANCLARAYDMVLNGWEIGGGSIRIHRADVQEKVFAALKISPEEQQEKFGFLLDNLKFGAPPHGGLAFGLDRLVTLMTGAESIRDVIAFPKTQRAQCLLTNAPNSVDDKQLRELSLRLRQKAAETKEA</sequence>